<name>MURD_PROM9</name>
<keyword id="KW-0067">ATP-binding</keyword>
<keyword id="KW-0131">Cell cycle</keyword>
<keyword id="KW-0132">Cell division</keyword>
<keyword id="KW-0133">Cell shape</keyword>
<keyword id="KW-0961">Cell wall biogenesis/degradation</keyword>
<keyword id="KW-0963">Cytoplasm</keyword>
<keyword id="KW-0436">Ligase</keyword>
<keyword id="KW-0547">Nucleotide-binding</keyword>
<keyword id="KW-0573">Peptidoglycan synthesis</keyword>
<evidence type="ECO:0000255" key="1">
    <source>
        <dbReference type="HAMAP-Rule" id="MF_00639"/>
    </source>
</evidence>
<comment type="function">
    <text evidence="1">Cell wall formation. Catalyzes the addition of glutamate to the nucleotide precursor UDP-N-acetylmuramoyl-L-alanine (UMA).</text>
</comment>
<comment type="catalytic activity">
    <reaction evidence="1">
        <text>UDP-N-acetyl-alpha-D-muramoyl-L-alanine + D-glutamate + ATP = UDP-N-acetyl-alpha-D-muramoyl-L-alanyl-D-glutamate + ADP + phosphate + H(+)</text>
        <dbReference type="Rhea" id="RHEA:16429"/>
        <dbReference type="ChEBI" id="CHEBI:15378"/>
        <dbReference type="ChEBI" id="CHEBI:29986"/>
        <dbReference type="ChEBI" id="CHEBI:30616"/>
        <dbReference type="ChEBI" id="CHEBI:43474"/>
        <dbReference type="ChEBI" id="CHEBI:83898"/>
        <dbReference type="ChEBI" id="CHEBI:83900"/>
        <dbReference type="ChEBI" id="CHEBI:456216"/>
        <dbReference type="EC" id="6.3.2.9"/>
    </reaction>
</comment>
<comment type="pathway">
    <text evidence="1">Cell wall biogenesis; peptidoglycan biosynthesis.</text>
</comment>
<comment type="subcellular location">
    <subcellularLocation>
        <location evidence="1">Cytoplasm</location>
    </subcellularLocation>
</comment>
<comment type="similarity">
    <text evidence="1">Belongs to the MurCDEF family.</text>
</comment>
<proteinExistence type="inferred from homology"/>
<gene>
    <name evidence="1" type="primary">murD</name>
    <name type="ordered locus">PMT9312_1461</name>
</gene>
<organism>
    <name type="scientific">Prochlorococcus marinus (strain MIT 9312)</name>
    <dbReference type="NCBI Taxonomy" id="74546"/>
    <lineage>
        <taxon>Bacteria</taxon>
        <taxon>Bacillati</taxon>
        <taxon>Cyanobacteriota</taxon>
        <taxon>Cyanophyceae</taxon>
        <taxon>Synechococcales</taxon>
        <taxon>Prochlorococcaceae</taxon>
        <taxon>Prochlorococcus</taxon>
    </lineage>
</organism>
<dbReference type="EC" id="6.3.2.9" evidence="1"/>
<dbReference type="EMBL" id="CP000111">
    <property type="protein sequence ID" value="ABB50521.1"/>
    <property type="molecule type" value="Genomic_DNA"/>
</dbReference>
<dbReference type="RefSeq" id="WP_011377005.1">
    <property type="nucleotide sequence ID" value="NC_007577.1"/>
</dbReference>
<dbReference type="SMR" id="Q319C4"/>
<dbReference type="STRING" id="74546.PMT9312_1461"/>
<dbReference type="KEGG" id="pmi:PMT9312_1461"/>
<dbReference type="eggNOG" id="COG0771">
    <property type="taxonomic scope" value="Bacteria"/>
</dbReference>
<dbReference type="HOGENOM" id="CLU_032540_0_0_3"/>
<dbReference type="OrthoDB" id="9809796at2"/>
<dbReference type="UniPathway" id="UPA00219"/>
<dbReference type="Proteomes" id="UP000002715">
    <property type="component" value="Chromosome"/>
</dbReference>
<dbReference type="GO" id="GO:0005737">
    <property type="term" value="C:cytoplasm"/>
    <property type="evidence" value="ECO:0007669"/>
    <property type="project" value="UniProtKB-SubCell"/>
</dbReference>
<dbReference type="GO" id="GO:0005524">
    <property type="term" value="F:ATP binding"/>
    <property type="evidence" value="ECO:0007669"/>
    <property type="project" value="UniProtKB-UniRule"/>
</dbReference>
<dbReference type="GO" id="GO:0004326">
    <property type="term" value="F:tetrahydrofolylpolyglutamate synthase activity"/>
    <property type="evidence" value="ECO:0007669"/>
    <property type="project" value="InterPro"/>
</dbReference>
<dbReference type="GO" id="GO:0008764">
    <property type="term" value="F:UDP-N-acetylmuramoylalanine-D-glutamate ligase activity"/>
    <property type="evidence" value="ECO:0007669"/>
    <property type="project" value="UniProtKB-UniRule"/>
</dbReference>
<dbReference type="GO" id="GO:0051301">
    <property type="term" value="P:cell division"/>
    <property type="evidence" value="ECO:0007669"/>
    <property type="project" value="UniProtKB-KW"/>
</dbReference>
<dbReference type="GO" id="GO:0071555">
    <property type="term" value="P:cell wall organization"/>
    <property type="evidence" value="ECO:0007669"/>
    <property type="project" value="UniProtKB-KW"/>
</dbReference>
<dbReference type="GO" id="GO:0009252">
    <property type="term" value="P:peptidoglycan biosynthetic process"/>
    <property type="evidence" value="ECO:0007669"/>
    <property type="project" value="UniProtKB-UniRule"/>
</dbReference>
<dbReference type="GO" id="GO:0008360">
    <property type="term" value="P:regulation of cell shape"/>
    <property type="evidence" value="ECO:0007669"/>
    <property type="project" value="UniProtKB-KW"/>
</dbReference>
<dbReference type="Gene3D" id="3.90.190.20">
    <property type="entry name" value="Mur ligase, C-terminal domain"/>
    <property type="match status" value="1"/>
</dbReference>
<dbReference type="Gene3D" id="3.40.1190.10">
    <property type="entry name" value="Mur-like, catalytic domain"/>
    <property type="match status" value="1"/>
</dbReference>
<dbReference type="Gene3D" id="3.40.50.720">
    <property type="entry name" value="NAD(P)-binding Rossmann-like Domain"/>
    <property type="match status" value="1"/>
</dbReference>
<dbReference type="HAMAP" id="MF_00639">
    <property type="entry name" value="MurD"/>
    <property type="match status" value="1"/>
</dbReference>
<dbReference type="InterPro" id="IPR018109">
    <property type="entry name" value="Folylpolyglutamate_synth_CS"/>
</dbReference>
<dbReference type="InterPro" id="IPR036565">
    <property type="entry name" value="Mur-like_cat_sf"/>
</dbReference>
<dbReference type="InterPro" id="IPR004101">
    <property type="entry name" value="Mur_ligase_C"/>
</dbReference>
<dbReference type="InterPro" id="IPR036615">
    <property type="entry name" value="Mur_ligase_C_dom_sf"/>
</dbReference>
<dbReference type="InterPro" id="IPR013221">
    <property type="entry name" value="Mur_ligase_cen"/>
</dbReference>
<dbReference type="InterPro" id="IPR005762">
    <property type="entry name" value="MurD"/>
</dbReference>
<dbReference type="NCBIfam" id="TIGR01087">
    <property type="entry name" value="murD"/>
    <property type="match status" value="1"/>
</dbReference>
<dbReference type="PANTHER" id="PTHR43692">
    <property type="entry name" value="UDP-N-ACETYLMURAMOYLALANINE--D-GLUTAMATE LIGASE"/>
    <property type="match status" value="1"/>
</dbReference>
<dbReference type="PANTHER" id="PTHR43692:SF1">
    <property type="entry name" value="UDP-N-ACETYLMURAMOYLALANINE--D-GLUTAMATE LIGASE"/>
    <property type="match status" value="1"/>
</dbReference>
<dbReference type="Pfam" id="PF02875">
    <property type="entry name" value="Mur_ligase_C"/>
    <property type="match status" value="1"/>
</dbReference>
<dbReference type="Pfam" id="PF08245">
    <property type="entry name" value="Mur_ligase_M"/>
    <property type="match status" value="1"/>
</dbReference>
<dbReference type="Pfam" id="PF21799">
    <property type="entry name" value="MurD-like_N"/>
    <property type="match status" value="1"/>
</dbReference>
<dbReference type="SUPFAM" id="SSF51984">
    <property type="entry name" value="MurCD N-terminal domain"/>
    <property type="match status" value="1"/>
</dbReference>
<dbReference type="SUPFAM" id="SSF53623">
    <property type="entry name" value="MurD-like peptide ligases, catalytic domain"/>
    <property type="match status" value="1"/>
</dbReference>
<dbReference type="SUPFAM" id="SSF53244">
    <property type="entry name" value="MurD-like peptide ligases, peptide-binding domain"/>
    <property type="match status" value="1"/>
</dbReference>
<protein>
    <recommendedName>
        <fullName evidence="1">UDP-N-acetylmuramoylalanine--D-glutamate ligase</fullName>
        <ecNumber evidence="1">6.3.2.9</ecNumber>
    </recommendedName>
    <alternativeName>
        <fullName evidence="1">D-glutamic acid-adding enzyme</fullName>
    </alternativeName>
    <alternativeName>
        <fullName evidence="1">UDP-N-acetylmuramoyl-L-alanyl-D-glutamate synthetase</fullName>
    </alternativeName>
</protein>
<sequence length="468" mass="54131">MIDNNHLRKRKNINLVIGLGKSGVWAAKYLRSIDKRVIIWESKDGKEFLEIKTELEELNILVSLNKEFVFKEIHPFIKEIESVVVSPSIPYDHETIIKLKKKGIKVIGEINVAWEILKETNWIGITGTNGKTTVTHLLSHILCENKLYAPFAGNIGTPLCKYAYSKKYEKIDWVVAELSSYQIEISPEVKPNIGIWTTFTEDHLERHKTLENYFNIKKSLLEKSDFRIYNYDDKNLRNHYSSLSKGVWITTSLDKSNFIQCDYWIDDQAFIIERGKRLFKLEHFSLKGIHNLQNLLLVIAAARKVGLSGKKIKDSLSNYKQLPHRMETIYKNNDLEIINDSKATNFDSSIAGINSIEGQIIIISGGRLKGNKYSEWVQVLKQKVKCIFLFGESSKVLKMALINEGFKKDIFEFSELKELLNFVFHYLQNNKVGTLLFSPSCSSFDQFKNYEERGDHFKKLISEKLKVN</sequence>
<reference key="1">
    <citation type="journal article" date="2006" name="Science">
        <title>Genomic islands and the ecology and evolution of Prochlorococcus.</title>
        <authorList>
            <person name="Coleman M.L."/>
            <person name="Sullivan M.B."/>
            <person name="Martiny A.C."/>
            <person name="Steglich C."/>
            <person name="Barry K."/>
            <person name="Delong E.F."/>
            <person name="Chisholm S.W."/>
        </authorList>
    </citation>
    <scope>NUCLEOTIDE SEQUENCE [LARGE SCALE GENOMIC DNA]</scope>
    <source>
        <strain>MIT 9312</strain>
    </source>
</reference>
<feature type="chain" id="PRO_0000257214" description="UDP-N-acetylmuramoylalanine--D-glutamate ligase">
    <location>
        <begin position="1"/>
        <end position="468"/>
    </location>
</feature>
<feature type="binding site" evidence="1">
    <location>
        <begin position="127"/>
        <end position="133"/>
    </location>
    <ligand>
        <name>ATP</name>
        <dbReference type="ChEBI" id="CHEBI:30616"/>
    </ligand>
</feature>
<accession>Q319C4</accession>